<proteinExistence type="inferred from homology"/>
<comment type="function">
    <text evidence="1">Involved in the degradation of chitin. ChbG is essential for growth on the acetylated chitooligosaccharides chitobiose and chitotriose but is dispensable for growth on cellobiose and chitosan dimer, the deacetylated form of chitobiose. Deacetylation of chitobiose-6-P and chitotriose-6-P is necessary for both the activation of the chb promoter by the regulatory protein ChbR and the hydrolysis of phosphorylated beta-glucosides by the phospho-beta-glucosidase ChbF. Catalyzes the removal of only one acetyl group from chitobiose-6-P to yield monoacetylchitobiose-6-P, the inducer of ChbR and the substrate of ChbF.</text>
</comment>
<comment type="catalytic activity">
    <reaction evidence="1">
        <text>N,N'-diacetylchitobiose + H2O = N-acetyl-beta-D-glucosaminyl-(1-&gt;4)-D-glucosamine + acetate</text>
        <dbReference type="Rhea" id="RHEA:27469"/>
        <dbReference type="ChEBI" id="CHEBI:15377"/>
        <dbReference type="ChEBI" id="CHEBI:28681"/>
        <dbReference type="ChEBI" id="CHEBI:30089"/>
        <dbReference type="ChEBI" id="CHEBI:59910"/>
        <dbReference type="EC" id="3.5.1.105"/>
    </reaction>
</comment>
<comment type="catalytic activity">
    <reaction evidence="1">
        <text>diacetylchitobiose-6'-phosphate + H2O = N'-monoacetylchitobiose-6'-phosphate + acetate</text>
        <dbReference type="Rhea" id="RHEA:35083"/>
        <dbReference type="ChEBI" id="CHEBI:15377"/>
        <dbReference type="ChEBI" id="CHEBI:30089"/>
        <dbReference type="ChEBI" id="CHEBI:64883"/>
        <dbReference type="ChEBI" id="CHEBI:71315"/>
    </reaction>
</comment>
<comment type="cofactor">
    <cofactor evidence="1">
        <name>Mg(2+)</name>
        <dbReference type="ChEBI" id="CHEBI:18420"/>
    </cofactor>
</comment>
<comment type="pathway">
    <text evidence="1">Glycan degradation; chitin degradation.</text>
</comment>
<comment type="subunit">
    <text evidence="1">Homodimer.</text>
</comment>
<comment type="subcellular location">
    <subcellularLocation>
        <location evidence="1">Cytoplasm</location>
    </subcellularLocation>
</comment>
<comment type="similarity">
    <text evidence="1">Belongs to the YdjC deacetylase family. ChbG subfamily.</text>
</comment>
<accession>B6IBF3</accession>
<evidence type="ECO:0000255" key="1">
    <source>
        <dbReference type="HAMAP-Rule" id="MF_01246"/>
    </source>
</evidence>
<name>CHBG_ECOSE</name>
<feature type="chain" id="PRO_1000139825" description="Chitooligosaccharide deacetylase">
    <location>
        <begin position="1"/>
        <end position="252"/>
    </location>
</feature>
<feature type="binding site" evidence="1">
    <location>
        <position position="61"/>
    </location>
    <ligand>
        <name>Mg(2+)</name>
        <dbReference type="ChEBI" id="CHEBI:18420"/>
    </ligand>
</feature>
<feature type="binding site" evidence="1">
    <location>
        <position position="125"/>
    </location>
    <ligand>
        <name>Mg(2+)</name>
        <dbReference type="ChEBI" id="CHEBI:18420"/>
    </ligand>
</feature>
<protein>
    <recommendedName>
        <fullName evidence="1">Chitooligosaccharide deacetylase</fullName>
        <shortName evidence="1">COD</shortName>
        <ecNumber evidence="1">3.5.1.105</ecNumber>
    </recommendedName>
    <alternativeName>
        <fullName evidence="1">Chitin disaccharide deacetylase</fullName>
    </alternativeName>
    <alternativeName>
        <fullName evidence="1">Chitobiose deacetylase</fullName>
    </alternativeName>
    <alternativeName>
        <fullName evidence="1">Chitobiose-6P deacetylase</fullName>
    </alternativeName>
    <alternativeName>
        <fullName evidence="1">Chitotriose deacetylase</fullName>
    </alternativeName>
    <alternativeName>
        <fullName evidence="1">Chitotriose-6P deacetylase</fullName>
    </alternativeName>
</protein>
<sequence length="252" mass="27987">MERLLIVNADDFGLSKGQNYGIIEACRNGIVTSTTALVNGQAIDHAVQLSRDEPSLAIGMHFVLTMGKPLTAMPGLTRDGVLGKWIWQLAEEDALPLEEITQELASQYLRFIELFGRKPTHLDSHHHVHMFPQIFPIVARFAAEEGIALRIDRQPLSNSGDLPANLRSSQGFSSAFYGEEISEALFLQVLDDASHRGDLSLEVMCHPAFIDNTIRQSAYCFPRLTELEVLTSASLKYAIAERGYRLGSYLNV</sequence>
<keyword id="KW-0119">Carbohydrate metabolism</keyword>
<keyword id="KW-0146">Chitin degradation</keyword>
<keyword id="KW-0963">Cytoplasm</keyword>
<keyword id="KW-0378">Hydrolase</keyword>
<keyword id="KW-0460">Magnesium</keyword>
<keyword id="KW-0479">Metal-binding</keyword>
<keyword id="KW-0624">Polysaccharide degradation</keyword>
<dbReference type="EC" id="3.5.1.105" evidence="1"/>
<dbReference type="EMBL" id="AP009240">
    <property type="protein sequence ID" value="BAG77427.1"/>
    <property type="molecule type" value="Genomic_DNA"/>
</dbReference>
<dbReference type="RefSeq" id="WP_000440450.1">
    <property type="nucleotide sequence ID" value="NC_011415.1"/>
</dbReference>
<dbReference type="SMR" id="B6IBF3"/>
<dbReference type="KEGG" id="ecy:ECSE_1903"/>
<dbReference type="HOGENOM" id="CLU_064244_4_1_6"/>
<dbReference type="UniPathway" id="UPA00349"/>
<dbReference type="Proteomes" id="UP000008199">
    <property type="component" value="Chromosome"/>
</dbReference>
<dbReference type="GO" id="GO:0005737">
    <property type="term" value="C:cytoplasm"/>
    <property type="evidence" value="ECO:0007669"/>
    <property type="project" value="UniProtKB-SubCell"/>
</dbReference>
<dbReference type="GO" id="GO:0036311">
    <property type="term" value="F:chitin disaccharide deacetylase activity"/>
    <property type="evidence" value="ECO:0007669"/>
    <property type="project" value="UniProtKB-UniRule"/>
</dbReference>
<dbReference type="GO" id="GO:0019213">
    <property type="term" value="F:deacetylase activity"/>
    <property type="evidence" value="ECO:0007669"/>
    <property type="project" value="TreeGrafter"/>
</dbReference>
<dbReference type="GO" id="GO:0046872">
    <property type="term" value="F:metal ion binding"/>
    <property type="evidence" value="ECO:0007669"/>
    <property type="project" value="UniProtKB-KW"/>
</dbReference>
<dbReference type="GO" id="GO:0006032">
    <property type="term" value="P:chitin catabolic process"/>
    <property type="evidence" value="ECO:0007669"/>
    <property type="project" value="UniProtKB-UniPathway"/>
</dbReference>
<dbReference type="GO" id="GO:0052777">
    <property type="term" value="P:diacetylchitobiose catabolic process"/>
    <property type="evidence" value="ECO:0007669"/>
    <property type="project" value="UniProtKB-UniRule"/>
</dbReference>
<dbReference type="GO" id="GO:0000272">
    <property type="term" value="P:polysaccharide catabolic process"/>
    <property type="evidence" value="ECO:0007669"/>
    <property type="project" value="UniProtKB-UniRule"/>
</dbReference>
<dbReference type="CDD" id="cd10803">
    <property type="entry name" value="YdjC_EF3048_like"/>
    <property type="match status" value="1"/>
</dbReference>
<dbReference type="FunFam" id="3.20.20.370:FF:000001">
    <property type="entry name" value="Chitooligosaccharide deacetylase"/>
    <property type="match status" value="1"/>
</dbReference>
<dbReference type="Gene3D" id="3.20.20.370">
    <property type="entry name" value="Glycoside hydrolase/deacetylase"/>
    <property type="match status" value="1"/>
</dbReference>
<dbReference type="HAMAP" id="MF_01246">
    <property type="entry name" value="COD"/>
    <property type="match status" value="1"/>
</dbReference>
<dbReference type="InterPro" id="IPR022948">
    <property type="entry name" value="COD_ChbG_bac"/>
</dbReference>
<dbReference type="InterPro" id="IPR011330">
    <property type="entry name" value="Glyco_hydro/deAcase_b/a-brl"/>
</dbReference>
<dbReference type="InterPro" id="IPR006879">
    <property type="entry name" value="YdjC-like"/>
</dbReference>
<dbReference type="NCBIfam" id="NF002559">
    <property type="entry name" value="PRK02134.1"/>
    <property type="match status" value="1"/>
</dbReference>
<dbReference type="PANTHER" id="PTHR31609:SF1">
    <property type="entry name" value="CARBOHYDRATE DEACETYLASE"/>
    <property type="match status" value="1"/>
</dbReference>
<dbReference type="PANTHER" id="PTHR31609">
    <property type="entry name" value="YDJC DEACETYLASE FAMILY MEMBER"/>
    <property type="match status" value="1"/>
</dbReference>
<dbReference type="Pfam" id="PF04794">
    <property type="entry name" value="YdjC"/>
    <property type="match status" value="1"/>
</dbReference>
<dbReference type="SUPFAM" id="SSF88713">
    <property type="entry name" value="Glycoside hydrolase/deacetylase"/>
    <property type="match status" value="1"/>
</dbReference>
<organism>
    <name type="scientific">Escherichia coli (strain SE11)</name>
    <dbReference type="NCBI Taxonomy" id="409438"/>
    <lineage>
        <taxon>Bacteria</taxon>
        <taxon>Pseudomonadati</taxon>
        <taxon>Pseudomonadota</taxon>
        <taxon>Gammaproteobacteria</taxon>
        <taxon>Enterobacterales</taxon>
        <taxon>Enterobacteriaceae</taxon>
        <taxon>Escherichia</taxon>
    </lineage>
</organism>
<gene>
    <name evidence="1" type="primary">chbG</name>
    <name type="ordered locus">ECSE_1903</name>
</gene>
<reference key="1">
    <citation type="journal article" date="2008" name="DNA Res.">
        <title>Complete genome sequence and comparative analysis of the wild-type commensal Escherichia coli strain SE11 isolated from a healthy adult.</title>
        <authorList>
            <person name="Oshima K."/>
            <person name="Toh H."/>
            <person name="Ogura Y."/>
            <person name="Sasamoto H."/>
            <person name="Morita H."/>
            <person name="Park S.-H."/>
            <person name="Ooka T."/>
            <person name="Iyoda S."/>
            <person name="Taylor T.D."/>
            <person name="Hayashi T."/>
            <person name="Itoh K."/>
            <person name="Hattori M."/>
        </authorList>
    </citation>
    <scope>NUCLEOTIDE SEQUENCE [LARGE SCALE GENOMIC DNA]</scope>
    <source>
        <strain>SE11</strain>
    </source>
</reference>